<gene>
    <name evidence="1" type="primary">rps10</name>
    <name type="ordered locus">Saci_0684</name>
</gene>
<reference key="1">
    <citation type="journal article" date="1991" name="Syst. Appl. Microbiol.">
        <title>Organisation and nucleotide sequence of a gene cluster comprising the translation elongation factor 1-alpha from the extreme thermophilic archaebacterium Sulfolobus acidocaldarius: phylogenetic implications.</title>
        <authorList>
            <person name="Auer J."/>
            <person name="Spicker G."/>
            <person name="Mayerhofer L."/>
            <person name="Puehler G."/>
            <person name="Boeck A."/>
        </authorList>
    </citation>
    <scope>NUCLEOTIDE SEQUENCE [GENOMIC DNA]</scope>
    <source>
        <strain>ATCC 33909 / DSM 639 / JCM 8929 / NBRC 15157 / NCIMB 11770</strain>
    </source>
</reference>
<reference key="2">
    <citation type="journal article" date="2005" name="J. Bacteriol.">
        <title>The genome of Sulfolobus acidocaldarius, a model organism of the Crenarchaeota.</title>
        <authorList>
            <person name="Chen L."/>
            <person name="Bruegger K."/>
            <person name="Skovgaard M."/>
            <person name="Redder P."/>
            <person name="She Q."/>
            <person name="Torarinsson E."/>
            <person name="Greve B."/>
            <person name="Awayez M."/>
            <person name="Zibat A."/>
            <person name="Klenk H.-P."/>
            <person name="Garrett R.A."/>
        </authorList>
    </citation>
    <scope>NUCLEOTIDE SEQUENCE [LARGE SCALE GENOMIC DNA]</scope>
    <source>
        <strain>ATCC 33909 / DSM 639 / JCM 8929 / NBRC 15157 / NCIMB 11770</strain>
    </source>
</reference>
<dbReference type="EMBL" id="X52382">
    <property type="protein sequence ID" value="CAA36609.1"/>
    <property type="molecule type" value="Genomic_DNA"/>
</dbReference>
<dbReference type="EMBL" id="CP000077">
    <property type="protein sequence ID" value="AAY80064.1"/>
    <property type="molecule type" value="Genomic_DNA"/>
</dbReference>
<dbReference type="PIR" id="S12819">
    <property type="entry name" value="R3UC10"/>
</dbReference>
<dbReference type="RefSeq" id="WP_011277566.1">
    <property type="nucleotide sequence ID" value="NC_007181.1"/>
</dbReference>
<dbReference type="PDB" id="8HKX">
    <property type="method" value="EM"/>
    <property type="resolution" value="3.14 A"/>
    <property type="chains" value="S10P=3-102"/>
</dbReference>
<dbReference type="PDB" id="8HKY">
    <property type="method" value="EM"/>
    <property type="resolution" value="4.45 A"/>
    <property type="chains" value="S10P=3-102"/>
</dbReference>
<dbReference type="PDB" id="8HKZ">
    <property type="method" value="EM"/>
    <property type="resolution" value="4.78 A"/>
    <property type="chains" value="S10P=3-102"/>
</dbReference>
<dbReference type="PDB" id="8HL1">
    <property type="method" value="EM"/>
    <property type="resolution" value="3.93 A"/>
    <property type="chains" value="S10P=3-102"/>
</dbReference>
<dbReference type="PDB" id="8HL2">
    <property type="method" value="EM"/>
    <property type="resolution" value="4.10 A"/>
    <property type="chains" value="S10P=3-102"/>
</dbReference>
<dbReference type="PDB" id="8HL3">
    <property type="method" value="EM"/>
    <property type="resolution" value="4.80 A"/>
    <property type="chains" value="S10P=3-102"/>
</dbReference>
<dbReference type="PDB" id="8HL4">
    <property type="method" value="EM"/>
    <property type="resolution" value="4.62 A"/>
    <property type="chains" value="S10P=3-102"/>
</dbReference>
<dbReference type="PDB" id="8HL5">
    <property type="method" value="EM"/>
    <property type="resolution" value="5.72 A"/>
    <property type="chains" value="S10P=3-102"/>
</dbReference>
<dbReference type="PDB" id="8WKP">
    <property type="method" value="EM"/>
    <property type="resolution" value="4.62 A"/>
    <property type="chains" value="S10P=3-102"/>
</dbReference>
<dbReference type="PDB" id="8WQ2">
    <property type="method" value="EM"/>
    <property type="resolution" value="4.10 A"/>
    <property type="chains" value="S10P=3-102"/>
</dbReference>
<dbReference type="PDB" id="8WQ4">
    <property type="method" value="EM"/>
    <property type="resolution" value="4.53 A"/>
    <property type="chains" value="S10P=3-102"/>
</dbReference>
<dbReference type="PDBsum" id="8HKX"/>
<dbReference type="PDBsum" id="8HKY"/>
<dbReference type="PDBsum" id="8HKZ"/>
<dbReference type="PDBsum" id="8HL1"/>
<dbReference type="PDBsum" id="8HL2"/>
<dbReference type="PDBsum" id="8HL3"/>
<dbReference type="PDBsum" id="8HL4"/>
<dbReference type="PDBsum" id="8HL5"/>
<dbReference type="PDBsum" id="8WKP"/>
<dbReference type="PDBsum" id="8WQ2"/>
<dbReference type="PDBsum" id="8WQ4"/>
<dbReference type="EMDB" id="EMD-34862"/>
<dbReference type="EMDB" id="EMD-34863"/>
<dbReference type="EMDB" id="EMD-34864"/>
<dbReference type="EMDB" id="EMD-34866"/>
<dbReference type="EMDB" id="EMD-34867"/>
<dbReference type="EMDB" id="EMD-34868"/>
<dbReference type="EMDB" id="EMD-34869"/>
<dbReference type="EMDB" id="EMD-34870"/>
<dbReference type="EMDB" id="EMD-37604"/>
<dbReference type="EMDB" id="EMD-37733"/>
<dbReference type="EMDB" id="EMD-37734"/>
<dbReference type="SMR" id="P17199"/>
<dbReference type="STRING" id="330779.Saci_0684"/>
<dbReference type="GeneID" id="14551199"/>
<dbReference type="KEGG" id="sai:Saci_0684"/>
<dbReference type="PATRIC" id="fig|330779.12.peg.652"/>
<dbReference type="eggNOG" id="arCOG01758">
    <property type="taxonomic scope" value="Archaea"/>
</dbReference>
<dbReference type="HOGENOM" id="CLU_122625_0_1_2"/>
<dbReference type="Proteomes" id="UP000001018">
    <property type="component" value="Chromosome"/>
</dbReference>
<dbReference type="GO" id="GO:0015935">
    <property type="term" value="C:small ribosomal subunit"/>
    <property type="evidence" value="ECO:0007669"/>
    <property type="project" value="InterPro"/>
</dbReference>
<dbReference type="GO" id="GO:0003735">
    <property type="term" value="F:structural constituent of ribosome"/>
    <property type="evidence" value="ECO:0007669"/>
    <property type="project" value="InterPro"/>
</dbReference>
<dbReference type="GO" id="GO:0000049">
    <property type="term" value="F:tRNA binding"/>
    <property type="evidence" value="ECO:0007669"/>
    <property type="project" value="UniProtKB-UniRule"/>
</dbReference>
<dbReference type="GO" id="GO:0006412">
    <property type="term" value="P:translation"/>
    <property type="evidence" value="ECO:0007669"/>
    <property type="project" value="UniProtKB-UniRule"/>
</dbReference>
<dbReference type="FunFam" id="3.30.70.600:FF:000004">
    <property type="entry name" value="30S ribosomal protein S10"/>
    <property type="match status" value="1"/>
</dbReference>
<dbReference type="Gene3D" id="3.30.70.600">
    <property type="entry name" value="Ribosomal protein S10 domain"/>
    <property type="match status" value="1"/>
</dbReference>
<dbReference type="HAMAP" id="MF_00508">
    <property type="entry name" value="Ribosomal_uS10"/>
    <property type="match status" value="1"/>
</dbReference>
<dbReference type="InterPro" id="IPR001848">
    <property type="entry name" value="Ribosomal_uS10"/>
</dbReference>
<dbReference type="InterPro" id="IPR018268">
    <property type="entry name" value="Ribosomal_uS10_CS"/>
</dbReference>
<dbReference type="InterPro" id="IPR027486">
    <property type="entry name" value="Ribosomal_uS10_dom"/>
</dbReference>
<dbReference type="InterPro" id="IPR036838">
    <property type="entry name" value="Ribosomal_uS10_dom_sf"/>
</dbReference>
<dbReference type="InterPro" id="IPR005729">
    <property type="entry name" value="Ribosomal_uS10_euk/arc"/>
</dbReference>
<dbReference type="NCBIfam" id="TIGR01046">
    <property type="entry name" value="uS10_euk_arch"/>
    <property type="match status" value="1"/>
</dbReference>
<dbReference type="PANTHER" id="PTHR11700">
    <property type="entry name" value="30S RIBOSOMAL PROTEIN S10 FAMILY MEMBER"/>
    <property type="match status" value="1"/>
</dbReference>
<dbReference type="Pfam" id="PF00338">
    <property type="entry name" value="Ribosomal_S10"/>
    <property type="match status" value="1"/>
</dbReference>
<dbReference type="PRINTS" id="PR00971">
    <property type="entry name" value="RIBOSOMALS10"/>
</dbReference>
<dbReference type="SMART" id="SM01403">
    <property type="entry name" value="Ribosomal_S10"/>
    <property type="match status" value="1"/>
</dbReference>
<dbReference type="SUPFAM" id="SSF54999">
    <property type="entry name" value="Ribosomal protein S10"/>
    <property type="match status" value="1"/>
</dbReference>
<dbReference type="PROSITE" id="PS00361">
    <property type="entry name" value="RIBOSOMAL_S10"/>
    <property type="match status" value="1"/>
</dbReference>
<accession>P17199</accession>
<accession>Q4JAW5</accession>
<feature type="chain" id="PRO_0000146659" description="Small ribosomal subunit protein uS10">
    <location>
        <begin position="1"/>
        <end position="102"/>
    </location>
</feature>
<protein>
    <recommendedName>
        <fullName evidence="1">Small ribosomal subunit protein uS10</fullName>
    </recommendedName>
    <alternativeName>
        <fullName evidence="2">30S ribosomal protein S10</fullName>
    </alternativeName>
</protein>
<proteinExistence type="evidence at protein level"/>
<evidence type="ECO:0000255" key="1">
    <source>
        <dbReference type="HAMAP-Rule" id="MF_00508"/>
    </source>
</evidence>
<evidence type="ECO:0000305" key="2"/>
<keyword id="KW-0002">3D-structure</keyword>
<keyword id="KW-1185">Reference proteome</keyword>
<keyword id="KW-0687">Ribonucleoprotein</keyword>
<keyword id="KW-0689">Ribosomal protein</keyword>
<organism>
    <name type="scientific">Sulfolobus acidocaldarius (strain ATCC 33909 / DSM 639 / JCM 8929 / NBRC 15157 / NCIMB 11770)</name>
    <dbReference type="NCBI Taxonomy" id="330779"/>
    <lineage>
        <taxon>Archaea</taxon>
        <taxon>Thermoproteota</taxon>
        <taxon>Thermoprotei</taxon>
        <taxon>Sulfolobales</taxon>
        <taxon>Sulfolobaceae</taxon>
        <taxon>Sulfolobus</taxon>
    </lineage>
</organism>
<sequence>MPTKARIRLWSSNIDSLNFVVNQIRNMAQKTGIQVSGPIPLPTTRMEVPVMRLPHGEGKKKWEHWEMKVHKRIIDIAADERVMRQLMRVRVPDDVYIEIELI</sequence>
<comment type="function">
    <text evidence="1">Involved in the binding of tRNA to the ribosomes.</text>
</comment>
<comment type="subunit">
    <text evidence="1">Part of the 30S ribosomal subunit.</text>
</comment>
<comment type="similarity">
    <text evidence="1">Belongs to the universal ribosomal protein uS10 family.</text>
</comment>
<name>RS10_SULAC</name>